<organism>
    <name type="scientific">Granulibacter bethesdensis (strain ATCC BAA-1260 / CGDNIH1)</name>
    <dbReference type="NCBI Taxonomy" id="391165"/>
    <lineage>
        <taxon>Bacteria</taxon>
        <taxon>Pseudomonadati</taxon>
        <taxon>Pseudomonadota</taxon>
        <taxon>Alphaproteobacteria</taxon>
        <taxon>Acetobacterales</taxon>
        <taxon>Acetobacteraceae</taxon>
        <taxon>Granulibacter</taxon>
    </lineage>
</organism>
<evidence type="ECO:0000255" key="1">
    <source>
        <dbReference type="HAMAP-Rule" id="MF_00328"/>
    </source>
</evidence>
<reference key="1">
    <citation type="journal article" date="2007" name="J. Bacteriol.">
        <title>Genome sequence analysis of the emerging human pathogenic acetic acid bacterium Granulibacter bethesdensis.</title>
        <authorList>
            <person name="Greenberg D.E."/>
            <person name="Porcella S.F."/>
            <person name="Zelazny A.M."/>
            <person name="Virtaneva K."/>
            <person name="Sturdevant D.E."/>
            <person name="Kupko J.J. III"/>
            <person name="Barbian K.D."/>
            <person name="Babar A."/>
            <person name="Dorward D.W."/>
            <person name="Holland S.M."/>
        </authorList>
    </citation>
    <scope>NUCLEOTIDE SEQUENCE [LARGE SCALE GENOMIC DNA]</scope>
    <source>
        <strain>ATCC BAA-1260 / CGDNIH1</strain>
    </source>
</reference>
<sequence length="213" mass="23271">MMRPLPETGRRGLCLVVAAPSGAGKSSITRALLAEDPGLRLSVSVTTRAPRAGEQEGVHYYFRTQEEFDAMAAEGQLLEYARVFGRSYGTPRGPVQKALSEGSDVLFDVDWQGYHQLRSALPGDVVGIFVLPPSLDDLASRLEGRGDAPDIIAQRMAAARDEIAHVGEFPYVVVNTHLPEAIDQVRTILHAARTETKRQGWLRHWLGGLGLSE</sequence>
<dbReference type="EC" id="2.7.4.8" evidence="1"/>
<dbReference type="EMBL" id="CP000394">
    <property type="protein sequence ID" value="ABI63103.1"/>
    <property type="molecule type" value="Genomic_DNA"/>
</dbReference>
<dbReference type="RefSeq" id="WP_011632905.1">
    <property type="nucleotide sequence ID" value="NC_008343.2"/>
</dbReference>
<dbReference type="SMR" id="Q0BPZ9"/>
<dbReference type="STRING" id="391165.GbCGDNIH1_2205"/>
<dbReference type="GeneID" id="69746386"/>
<dbReference type="KEGG" id="gbe:GbCGDNIH1_2205"/>
<dbReference type="eggNOG" id="COG0194">
    <property type="taxonomic scope" value="Bacteria"/>
</dbReference>
<dbReference type="HOGENOM" id="CLU_001715_1_0_5"/>
<dbReference type="OrthoDB" id="9808150at2"/>
<dbReference type="Proteomes" id="UP000001963">
    <property type="component" value="Chromosome"/>
</dbReference>
<dbReference type="GO" id="GO:0005829">
    <property type="term" value="C:cytosol"/>
    <property type="evidence" value="ECO:0007669"/>
    <property type="project" value="TreeGrafter"/>
</dbReference>
<dbReference type="GO" id="GO:0005524">
    <property type="term" value="F:ATP binding"/>
    <property type="evidence" value="ECO:0007669"/>
    <property type="project" value="UniProtKB-UniRule"/>
</dbReference>
<dbReference type="GO" id="GO:0004385">
    <property type="term" value="F:guanylate kinase activity"/>
    <property type="evidence" value="ECO:0007669"/>
    <property type="project" value="UniProtKB-UniRule"/>
</dbReference>
<dbReference type="CDD" id="cd00071">
    <property type="entry name" value="GMPK"/>
    <property type="match status" value="1"/>
</dbReference>
<dbReference type="FunFam" id="3.30.63.10:FF:000002">
    <property type="entry name" value="Guanylate kinase 1"/>
    <property type="match status" value="1"/>
</dbReference>
<dbReference type="Gene3D" id="3.30.63.10">
    <property type="entry name" value="Guanylate Kinase phosphate binding domain"/>
    <property type="match status" value="1"/>
</dbReference>
<dbReference type="Gene3D" id="3.40.50.300">
    <property type="entry name" value="P-loop containing nucleotide triphosphate hydrolases"/>
    <property type="match status" value="1"/>
</dbReference>
<dbReference type="HAMAP" id="MF_00328">
    <property type="entry name" value="Guanylate_kinase"/>
    <property type="match status" value="1"/>
</dbReference>
<dbReference type="InterPro" id="IPR008145">
    <property type="entry name" value="GK/Ca_channel_bsu"/>
</dbReference>
<dbReference type="InterPro" id="IPR008144">
    <property type="entry name" value="Guanylate_kin-like_dom"/>
</dbReference>
<dbReference type="InterPro" id="IPR017665">
    <property type="entry name" value="Guanylate_kinase"/>
</dbReference>
<dbReference type="InterPro" id="IPR020590">
    <property type="entry name" value="Guanylate_kinase_CS"/>
</dbReference>
<dbReference type="InterPro" id="IPR027417">
    <property type="entry name" value="P-loop_NTPase"/>
</dbReference>
<dbReference type="NCBIfam" id="TIGR03263">
    <property type="entry name" value="guanyl_kin"/>
    <property type="match status" value="1"/>
</dbReference>
<dbReference type="PANTHER" id="PTHR23117:SF13">
    <property type="entry name" value="GUANYLATE KINASE"/>
    <property type="match status" value="1"/>
</dbReference>
<dbReference type="PANTHER" id="PTHR23117">
    <property type="entry name" value="GUANYLATE KINASE-RELATED"/>
    <property type="match status" value="1"/>
</dbReference>
<dbReference type="Pfam" id="PF00625">
    <property type="entry name" value="Guanylate_kin"/>
    <property type="match status" value="1"/>
</dbReference>
<dbReference type="SMART" id="SM00072">
    <property type="entry name" value="GuKc"/>
    <property type="match status" value="1"/>
</dbReference>
<dbReference type="SUPFAM" id="SSF52540">
    <property type="entry name" value="P-loop containing nucleoside triphosphate hydrolases"/>
    <property type="match status" value="1"/>
</dbReference>
<dbReference type="PROSITE" id="PS00856">
    <property type="entry name" value="GUANYLATE_KINASE_1"/>
    <property type="match status" value="1"/>
</dbReference>
<dbReference type="PROSITE" id="PS50052">
    <property type="entry name" value="GUANYLATE_KINASE_2"/>
    <property type="match status" value="1"/>
</dbReference>
<gene>
    <name evidence="1" type="primary">gmk</name>
    <name type="ordered locus">GbCGDNIH1_2205</name>
</gene>
<protein>
    <recommendedName>
        <fullName evidence="1">Guanylate kinase</fullName>
        <ecNumber evidence="1">2.7.4.8</ecNumber>
    </recommendedName>
    <alternativeName>
        <fullName evidence="1">GMP kinase</fullName>
    </alternativeName>
</protein>
<keyword id="KW-0067">ATP-binding</keyword>
<keyword id="KW-0963">Cytoplasm</keyword>
<keyword id="KW-0418">Kinase</keyword>
<keyword id="KW-0547">Nucleotide-binding</keyword>
<keyword id="KW-1185">Reference proteome</keyword>
<keyword id="KW-0808">Transferase</keyword>
<proteinExistence type="inferred from homology"/>
<feature type="chain" id="PRO_0000266331" description="Guanylate kinase">
    <location>
        <begin position="1"/>
        <end position="213"/>
    </location>
</feature>
<feature type="domain" description="Guanylate kinase-like" evidence="1">
    <location>
        <begin position="12"/>
        <end position="190"/>
    </location>
</feature>
<feature type="binding site" evidence="1">
    <location>
        <begin position="19"/>
        <end position="26"/>
    </location>
    <ligand>
        <name>ATP</name>
        <dbReference type="ChEBI" id="CHEBI:30616"/>
    </ligand>
</feature>
<name>KGUA_GRABC</name>
<comment type="function">
    <text evidence="1">Essential for recycling GMP and indirectly, cGMP.</text>
</comment>
<comment type="catalytic activity">
    <reaction evidence="1">
        <text>GMP + ATP = GDP + ADP</text>
        <dbReference type="Rhea" id="RHEA:20780"/>
        <dbReference type="ChEBI" id="CHEBI:30616"/>
        <dbReference type="ChEBI" id="CHEBI:58115"/>
        <dbReference type="ChEBI" id="CHEBI:58189"/>
        <dbReference type="ChEBI" id="CHEBI:456216"/>
        <dbReference type="EC" id="2.7.4.8"/>
    </reaction>
</comment>
<comment type="subcellular location">
    <subcellularLocation>
        <location evidence="1">Cytoplasm</location>
    </subcellularLocation>
</comment>
<comment type="similarity">
    <text evidence="1">Belongs to the guanylate kinase family.</text>
</comment>
<accession>Q0BPZ9</accession>